<accession>A8LLZ7</accession>
<dbReference type="EMBL" id="CP000830">
    <property type="protein sequence ID" value="ABV94906.1"/>
    <property type="molecule type" value="Genomic_DNA"/>
</dbReference>
<dbReference type="RefSeq" id="WP_012179833.1">
    <property type="nucleotide sequence ID" value="NC_009952.1"/>
</dbReference>
<dbReference type="SMR" id="A8LLZ7"/>
<dbReference type="STRING" id="398580.Dshi_3173"/>
<dbReference type="KEGG" id="dsh:Dshi_3173"/>
<dbReference type="eggNOG" id="COG0535">
    <property type="taxonomic scope" value="Bacteria"/>
</dbReference>
<dbReference type="HOGENOM" id="CLU_009273_4_0_5"/>
<dbReference type="OrthoDB" id="9792276at2"/>
<dbReference type="Proteomes" id="UP000006833">
    <property type="component" value="Chromosome"/>
</dbReference>
<dbReference type="GO" id="GO:0051539">
    <property type="term" value="F:4 iron, 4 sulfur cluster binding"/>
    <property type="evidence" value="ECO:0007669"/>
    <property type="project" value="UniProtKB-KW"/>
</dbReference>
<dbReference type="GO" id="GO:0003824">
    <property type="term" value="F:catalytic activity"/>
    <property type="evidence" value="ECO:0007669"/>
    <property type="project" value="InterPro"/>
</dbReference>
<dbReference type="GO" id="GO:0046872">
    <property type="term" value="F:metal ion binding"/>
    <property type="evidence" value="ECO:0007669"/>
    <property type="project" value="UniProtKB-KW"/>
</dbReference>
<dbReference type="GO" id="GO:0006783">
    <property type="term" value="P:heme biosynthetic process"/>
    <property type="evidence" value="ECO:0007669"/>
    <property type="project" value="TreeGrafter"/>
</dbReference>
<dbReference type="CDD" id="cd01335">
    <property type="entry name" value="Radical_SAM"/>
    <property type="match status" value="1"/>
</dbReference>
<dbReference type="CDD" id="cd21123">
    <property type="entry name" value="SPASM_MftC-like"/>
    <property type="match status" value="1"/>
</dbReference>
<dbReference type="FunFam" id="3.20.20.70:FF:000188">
    <property type="entry name" value="Mycofactocin radical SAM maturase MftC"/>
    <property type="match status" value="1"/>
</dbReference>
<dbReference type="Gene3D" id="3.20.20.70">
    <property type="entry name" value="Aldolase class I"/>
    <property type="match status" value="1"/>
</dbReference>
<dbReference type="InterPro" id="IPR013785">
    <property type="entry name" value="Aldolase_TIM"/>
</dbReference>
<dbReference type="InterPro" id="IPR006638">
    <property type="entry name" value="Elp3/MiaA/NifB-like_rSAM"/>
</dbReference>
<dbReference type="InterPro" id="IPR023992">
    <property type="entry name" value="HemeD1_Synth_NirJ"/>
</dbReference>
<dbReference type="InterPro" id="IPR017200">
    <property type="entry name" value="PqqE-like"/>
</dbReference>
<dbReference type="InterPro" id="IPR050377">
    <property type="entry name" value="Radical_SAM_PqqE_MftC-like"/>
</dbReference>
<dbReference type="InterPro" id="IPR007197">
    <property type="entry name" value="rSAM"/>
</dbReference>
<dbReference type="NCBIfam" id="TIGR04051">
    <property type="entry name" value="rSAM_NirJ"/>
    <property type="match status" value="1"/>
</dbReference>
<dbReference type="PANTHER" id="PTHR11228:SF7">
    <property type="entry name" value="PQQA PEPTIDE CYCLASE"/>
    <property type="match status" value="1"/>
</dbReference>
<dbReference type="PANTHER" id="PTHR11228">
    <property type="entry name" value="RADICAL SAM DOMAIN PROTEIN"/>
    <property type="match status" value="1"/>
</dbReference>
<dbReference type="Pfam" id="PF13353">
    <property type="entry name" value="Fer4_12"/>
    <property type="match status" value="1"/>
</dbReference>
<dbReference type="Pfam" id="PF04055">
    <property type="entry name" value="Radical_SAM"/>
    <property type="match status" value="1"/>
</dbReference>
<dbReference type="PIRSF" id="PIRSF037420">
    <property type="entry name" value="PQQ_syn_pqqE"/>
    <property type="match status" value="1"/>
</dbReference>
<dbReference type="SFLD" id="SFLDF00393">
    <property type="entry name" value="heme_D1_biosynthesis_(NirJ-lik"/>
    <property type="match status" value="1"/>
</dbReference>
<dbReference type="SFLD" id="SFLDG01386">
    <property type="entry name" value="main_SPASM_domain-containing"/>
    <property type="match status" value="1"/>
</dbReference>
<dbReference type="SMART" id="SM00729">
    <property type="entry name" value="Elp3"/>
    <property type="match status" value="1"/>
</dbReference>
<dbReference type="SUPFAM" id="SSF102114">
    <property type="entry name" value="Radical SAM enzymes"/>
    <property type="match status" value="1"/>
</dbReference>
<dbReference type="PROSITE" id="PS51918">
    <property type="entry name" value="RADICAL_SAM"/>
    <property type="match status" value="1"/>
</dbReference>
<evidence type="ECO:0000255" key="1">
    <source>
        <dbReference type="PROSITE-ProRule" id="PRU01266"/>
    </source>
</evidence>
<evidence type="ECO:0000269" key="2">
    <source>
    </source>
</evidence>
<evidence type="ECO:0000303" key="3">
    <source>
    </source>
</evidence>
<evidence type="ECO:0000305" key="4"/>
<evidence type="ECO:0000305" key="5">
    <source>
    </source>
</evidence>
<evidence type="ECO:0000312" key="6">
    <source>
        <dbReference type="EMBL" id="ABV94906.1"/>
    </source>
</evidence>
<organism>
    <name type="scientific">Dinoroseobacter shibae (strain DSM 16493 / NCIMB 14021 / DFL 12)</name>
    <dbReference type="NCBI Taxonomy" id="398580"/>
    <lineage>
        <taxon>Bacteria</taxon>
        <taxon>Pseudomonadati</taxon>
        <taxon>Pseudomonadota</taxon>
        <taxon>Alphaproteobacteria</taxon>
        <taxon>Rhodobacterales</taxon>
        <taxon>Roseobacteraceae</taxon>
        <taxon>Dinoroseobacter</taxon>
    </lineage>
</organism>
<reference key="1">
    <citation type="journal article" date="2010" name="ISME J.">
        <title>The complete genome sequence of the algal symbiont Dinoroseobacter shibae: a hitchhiker's guide to life in the sea.</title>
        <authorList>
            <person name="Wagner-Dobler I."/>
            <person name="Ballhausen B."/>
            <person name="Berger M."/>
            <person name="Brinkhoff T."/>
            <person name="Buchholz I."/>
            <person name="Bunk B."/>
            <person name="Cypionka H."/>
            <person name="Daniel R."/>
            <person name="Drepper T."/>
            <person name="Gerdts G."/>
            <person name="Hahnke S."/>
            <person name="Han C."/>
            <person name="Jahn D."/>
            <person name="Kalhoefer D."/>
            <person name="Kiss H."/>
            <person name="Klenk H.P."/>
            <person name="Kyrpides N."/>
            <person name="Liebl W."/>
            <person name="Liesegang H."/>
            <person name="Meincke L."/>
            <person name="Pati A."/>
            <person name="Petersen J."/>
            <person name="Piekarski T."/>
            <person name="Pommerenke C."/>
            <person name="Pradella S."/>
            <person name="Pukall R."/>
            <person name="Rabus R."/>
            <person name="Stackebrandt E."/>
            <person name="Thole S."/>
            <person name="Thompson L."/>
            <person name="Tielen P."/>
            <person name="Tomasch J."/>
            <person name="von Jan M."/>
            <person name="Wanphrut N."/>
            <person name="Wichels A."/>
            <person name="Zech H."/>
            <person name="Simon M."/>
        </authorList>
    </citation>
    <scope>NUCLEOTIDE SEQUENCE [LARGE SCALE GENOMIC DNA]</scope>
    <source>
        <strain>DSM 16493 / NCIMB 14021 / DFL 12</strain>
    </source>
</reference>
<reference key="2">
    <citation type="journal article" date="2017" name="FEBS J.">
        <title>The radical SAM enzyme NirJ catalyzes the removal of two propionate side chains during heme d1 biosynthesis.</title>
        <authorList>
            <person name="Boss L."/>
            <person name="Oehme R."/>
            <person name="Billig S."/>
            <person name="Birkemeyer C."/>
            <person name="Layer G."/>
        </authorList>
    </citation>
    <scope>FUNCTION</scope>
    <scope>COFACTOR</scope>
    <scope>PATHWAY</scope>
    <scope>MUTAGENESIS OF CYS-36; CYS-40 AND CYS-43</scope>
    <source>
        <strain>DSM 16493 / NCIMB 14021 / DFL 12</strain>
    </source>
</reference>
<comment type="function">
    <text evidence="2">Involved in heme d1 biosynthesis (PubMed:29076625). Radical SAM enzyme that catalyzes the removal of two propionate side chains from the intermediate 12,18-didecarboxysiroheme (DDSH) and may introduce the keto functions on rings A and B, yielding the heme d1 precursor dihydro-heme d1 (PubMed:29076625).</text>
</comment>
<comment type="cofactor">
    <cofactor evidence="1 2">
        <name>[4Fe-4S] cluster</name>
        <dbReference type="ChEBI" id="CHEBI:49883"/>
    </cofactor>
    <text evidence="2">Binds 2 [4Fe-4S] clusters per subunit.</text>
</comment>
<comment type="pathway">
    <text evidence="2">Porphyrin-containing compound metabolism.</text>
</comment>
<comment type="similarity">
    <text evidence="4">Belongs to the radical SAM superfamily.</text>
</comment>
<proteinExistence type="evidence at protein level"/>
<sequence>MFRLSHYLDQLYHPTPPRIARGTPKPVVIWNLTRRCNLKCKHCYTVSADVDFPGELTAAQARETLEDIGRFKVPALILSGGEPLLRDDLFALAKRARALTRVLALSTNGTGVIGSKADRVAEIGFDYVGISIDGIGATNDAFRGVIGAYEQALAGVRSCKRRGIKVGLRFTITEQNESQLPELLKLCDDEGVDKFYLSHLVYAGRGNKNRGEDADHARTRRAMDLLIARALESAEGRGHPLEIVTGNNDADAVYFLNWAKANFPAAQVAHLRKHLEAWGGNASGVGVANIDTQGDVHPDTYWSEYTVGSVKQTPFSELWTGPDPMLAELRRRPRPLKGRCGACAHQAVCGGNTRIRALQLTGDPWAEDPACYLTAAETGTATDIDRLTVRPFIGDRHDPKPAFV</sequence>
<gene>
    <name evidence="3" type="primary">nirJ</name>
    <name evidence="6" type="ordered locus">Dshi_3173</name>
</gene>
<feature type="chain" id="PRO_0000452837" description="Pre-heme d1 synthase">
    <location>
        <begin position="1"/>
        <end position="404"/>
    </location>
</feature>
<feature type="domain" description="Radical SAM core" evidence="1">
    <location>
        <begin position="22"/>
        <end position="235"/>
    </location>
</feature>
<feature type="binding site" evidence="1 2">
    <location>
        <position position="36"/>
    </location>
    <ligand>
        <name>[4Fe-4S] cluster</name>
        <dbReference type="ChEBI" id="CHEBI:49883"/>
        <label>1</label>
        <note>4Fe-4S-S-AdoMet</note>
    </ligand>
</feature>
<feature type="binding site" evidence="1 2">
    <location>
        <position position="40"/>
    </location>
    <ligand>
        <name>[4Fe-4S] cluster</name>
        <dbReference type="ChEBI" id="CHEBI:49883"/>
        <label>1</label>
        <note>4Fe-4S-S-AdoMet</note>
    </ligand>
</feature>
<feature type="binding site" evidence="1 2">
    <location>
        <position position="43"/>
    </location>
    <ligand>
        <name>[4Fe-4S] cluster</name>
        <dbReference type="ChEBI" id="CHEBI:49883"/>
        <label>1</label>
        <note>4Fe-4S-S-AdoMet</note>
    </ligand>
</feature>
<feature type="binding site" evidence="5">
    <location>
        <position position="340"/>
    </location>
    <ligand>
        <name>[4Fe-4S] cluster</name>
        <dbReference type="ChEBI" id="CHEBI:49883"/>
        <label>2</label>
    </ligand>
</feature>
<feature type="binding site" evidence="5">
    <location>
        <position position="343"/>
    </location>
    <ligand>
        <name>[4Fe-4S] cluster</name>
        <dbReference type="ChEBI" id="CHEBI:49883"/>
        <label>2</label>
    </ligand>
</feature>
<feature type="binding site" evidence="5">
    <location>
        <position position="349"/>
    </location>
    <ligand>
        <name>[4Fe-4S] cluster</name>
        <dbReference type="ChEBI" id="CHEBI:49883"/>
        <label>2</label>
    </ligand>
</feature>
<feature type="binding site" evidence="5">
    <location>
        <position position="371"/>
    </location>
    <ligand>
        <name>[4Fe-4S] cluster</name>
        <dbReference type="ChEBI" id="CHEBI:49883"/>
        <label>2</label>
    </ligand>
</feature>
<feature type="mutagenesis site" description="Contains half the amount of iron and sulfide per enzyme compared to the wild-type; when associated with A-40 and A-43." evidence="2">
    <original>C</original>
    <variation>A</variation>
    <location>
        <position position="36"/>
    </location>
</feature>
<feature type="mutagenesis site" description="Contains half the amount of iron and sulfide per enzyme compared to the wild-type; when associated with A-36 and A-43." evidence="2">
    <original>C</original>
    <variation>A</variation>
    <location>
        <position position="40"/>
    </location>
</feature>
<feature type="mutagenesis site" description="Contains half the amount of iron and sulfide per enzyme compared to the wild-type; when associated with A-36 and A-40." evidence="2">
    <original>C</original>
    <variation>A</variation>
    <location>
        <position position="43"/>
    </location>
</feature>
<name>NIRJ_DINSH</name>
<protein>
    <recommendedName>
        <fullName evidence="4">Pre-heme d1 synthase</fullName>
    </recommendedName>
</protein>
<keyword id="KW-0004">4Fe-4S</keyword>
<keyword id="KW-0408">Iron</keyword>
<keyword id="KW-0411">Iron-sulfur</keyword>
<keyword id="KW-0479">Metal-binding</keyword>
<keyword id="KW-1185">Reference proteome</keyword>
<keyword id="KW-0949">S-adenosyl-L-methionine</keyword>